<protein>
    <recommendedName>
        <fullName evidence="2">Potassium channel toxin alpha-KTx 14.5</fullName>
    </recommendedName>
    <alternativeName>
        <fullName evidence="2">Toxin Mgib29</fullName>
    </alternativeName>
</protein>
<proteinExistence type="inferred from homology"/>
<accession>A0A059U906</accession>
<dbReference type="EMBL" id="KF770827">
    <property type="protein sequence ID" value="AHZ63136.1"/>
    <property type="molecule type" value="mRNA"/>
</dbReference>
<dbReference type="SMR" id="A0A059U906"/>
<dbReference type="GO" id="GO:0005576">
    <property type="term" value="C:extracellular region"/>
    <property type="evidence" value="ECO:0007669"/>
    <property type="project" value="UniProtKB-SubCell"/>
</dbReference>
<dbReference type="GO" id="GO:0015459">
    <property type="term" value="F:potassium channel regulator activity"/>
    <property type="evidence" value="ECO:0007669"/>
    <property type="project" value="UniProtKB-KW"/>
</dbReference>
<dbReference type="GO" id="GO:0090729">
    <property type="term" value="F:toxin activity"/>
    <property type="evidence" value="ECO:0007669"/>
    <property type="project" value="UniProtKB-KW"/>
</dbReference>
<dbReference type="InterPro" id="IPR036574">
    <property type="entry name" value="Scorpion_toxin-like_sf"/>
</dbReference>
<dbReference type="SUPFAM" id="SSF57095">
    <property type="entry name" value="Scorpion toxin-like"/>
    <property type="match status" value="1"/>
</dbReference>
<comment type="function">
    <text evidence="1">Inhibits potassium channels. May be active towards small conductance calcium-activated potassium channels (KCNN, SK), and less active towards voltage-gated potassium channels (Kv/KCN).</text>
</comment>
<comment type="subcellular location">
    <subcellularLocation>
        <location evidence="1">Secreted</location>
    </subcellularLocation>
</comment>
<comment type="tissue specificity">
    <text evidence="3">Expressed by the venom gland.</text>
</comment>
<comment type="domain">
    <text evidence="1">Has the structural arrangement of an alpha-helix connected to a beta-sheet by disulfide bonds (CSalpha/beta).</text>
</comment>
<comment type="similarity">
    <text evidence="3">Belongs to the short scorpion toxin superfamily. Potassium channel inhibitor family. Alpha-KTx 14 subfamily.</text>
</comment>
<name>KA145_MESGB</name>
<evidence type="ECO:0000250" key="1">
    <source>
        <dbReference type="UniProtKB" id="Q95NK7"/>
    </source>
</evidence>
<evidence type="ECO:0000303" key="2">
    <source>
    </source>
</evidence>
<evidence type="ECO:0000305" key="3"/>
<sequence length="54" mass="5951">MKIFFAILLILAVCSMAIWTVNGTPFAIRCKTDSDCSYKCPGNPPCRNGFCKCT</sequence>
<reference key="1">
    <citation type="journal article" date="2014" name="BMC Genomics">
        <title>The Mediterranean scorpion Mesobuthus gibbosus (Scorpiones, Buthidae): transcriptome analysis and organization of the genome encoding chlorotoxin-like peptides.</title>
        <authorList>
            <person name="Diego-Garcia E."/>
            <person name="Caliskan F."/>
            <person name="Tytgat J."/>
        </authorList>
    </citation>
    <scope>NUCLEOTIDE SEQUENCE [MRNA]</scope>
    <scope>NOMENCLATURE</scope>
    <source>
        <tissue>Venom gland</tissue>
    </source>
</reference>
<organism>
    <name type="scientific">Mesobuthus gibbosus</name>
    <name type="common">Mediterranean checkered scorpion</name>
    <name type="synonym">Buthus gibbosus</name>
    <dbReference type="NCBI Taxonomy" id="123226"/>
    <lineage>
        <taxon>Eukaryota</taxon>
        <taxon>Metazoa</taxon>
        <taxon>Ecdysozoa</taxon>
        <taxon>Arthropoda</taxon>
        <taxon>Chelicerata</taxon>
        <taxon>Arachnida</taxon>
        <taxon>Scorpiones</taxon>
        <taxon>Buthida</taxon>
        <taxon>Buthoidea</taxon>
        <taxon>Buthidae</taxon>
        <taxon>Mesobuthus</taxon>
    </lineage>
</organism>
<keyword id="KW-1221">Calcium-activated potassium channel impairing toxin</keyword>
<keyword id="KW-1015">Disulfide bond</keyword>
<keyword id="KW-0872">Ion channel impairing toxin</keyword>
<keyword id="KW-0528">Neurotoxin</keyword>
<keyword id="KW-0632">Potassium channel impairing toxin</keyword>
<keyword id="KW-0964">Secreted</keyword>
<keyword id="KW-0732">Signal</keyword>
<keyword id="KW-0800">Toxin</keyword>
<keyword id="KW-1220">Voltage-gated potassium channel impairing toxin</keyword>
<feature type="signal peptide" evidence="1">
    <location>
        <begin position="1"/>
        <end position="23"/>
    </location>
</feature>
<feature type="chain" id="PRO_0000433144" description="Potassium channel toxin alpha-KTx 14.5">
    <location>
        <begin position="24"/>
        <end position="54"/>
    </location>
</feature>
<feature type="disulfide bond" evidence="1">
    <location>
        <begin position="30"/>
        <end position="46"/>
    </location>
</feature>
<feature type="disulfide bond" evidence="1">
    <location>
        <begin position="36"/>
        <end position="51"/>
    </location>
</feature>
<feature type="disulfide bond" evidence="1">
    <location>
        <begin position="40"/>
        <end position="53"/>
    </location>
</feature>